<evidence type="ECO:0000256" key="1">
    <source>
        <dbReference type="SAM" id="MobiDB-lite"/>
    </source>
</evidence>
<dbReference type="EMBL" id="M15194">
    <property type="protein sequence ID" value="AAA25725.1"/>
    <property type="molecule type" value="Genomic_DNA"/>
</dbReference>
<dbReference type="PIR" id="A27754">
    <property type="entry name" value="A27754"/>
</dbReference>
<dbReference type="PHI-base" id="PHI:3372"/>
<dbReference type="PHI-base" id="PHI:3442"/>
<dbReference type="PHI-base" id="PHI:963"/>
<dbReference type="InterPro" id="IPR053508">
    <property type="entry name" value="Pathogen_avirulence"/>
</dbReference>
<dbReference type="NCBIfam" id="NF041307">
    <property type="entry name" value="AvrBs1"/>
    <property type="match status" value="1"/>
</dbReference>
<name>AVRA_PSESG</name>
<proteinExistence type="predicted"/>
<sequence>MWNVSKSSNNLGAYKLPLEAQTPPEKISPFDAMSAAQPEGKAPHDQLQNDQYPIQQAEDRGRHLVEQAEIQAHVQHCHSKAPEIGDATKTQSVSEKLGTAKNSSCDASQILIGSKNDDFHKNKAGSNGDINKSSDPSALRCSLSPAPRRVPKSKKSYGAATIGGKVYHPHEKTDSTIADFLSRSLSNNAYRSERHLRKRALAYLNHISAEKEITSNACFAMKDVNSFAHKQSEWLCHLERSLWRDEPALQFHDRQQLGNEVLGLKKPDDQSPYFKPRAWKISDEAASAFAMMLKGESGPFTQDQVKVGFEICQEGELLAGRLKIQPRMAFRLKNRHDANRSGTHSVKSLSGLDLSADVGTDIREFFQVPVMSGTSGTSSDVVIAARYAAMHAGLKWSAPELTIDQAKHALIDLSMDFFRRNGPAVVMALRMNSLRKNQGLPYKEVDRCEVFTHSYAEIHGAISLTIDGVDPADKVEVKNRLYGYTLDAKATLMKIADRSIRRGVRSKVDIRSTSTSLQTPQLRRVLEKKKIVQKVAELYSEMGKAGNSATLKEAITKSSVKELLVNDKPVVSRDYALGEPLMVRSLRFSHDHEATSSFGSAGKTPAKREVDTLCDNSTAFDIVMTPFSVINAKAKGDTISEMKVPHRPKWKGLPSVLYKVTASVDLPEYAVARPGFGDIHSFNSNKAFSSEFSSVRNSLSHAEKMGFIENSLKPYIKHDPDRESFDFKHSIDELADAQCMLQSRKPNSTLRHNEYCAKLELWDAKAIEVGMSRPVAVATLIEFNLEMLSAARYIEDEGYDGKLITNFLERQLSWFGQNAALNKEVTLKKLWGLPFDERKAVAEKVCEALRQGVSLCVYEKNVEGSRIRELSLLNFNAYDIMRGIELFLSSKLLQPPTGAGPTVKSRL</sequence>
<accession>P11437</accession>
<protein>
    <recommendedName>
        <fullName>Avirulence protein A</fullName>
    </recommendedName>
</protein>
<keyword id="KW-0843">Virulence</keyword>
<reference key="1">
    <citation type="journal article" date="1987" name="J. Bacteriol.">
        <title>Molecular characterization and nucleic acid sequence of an avirulence gene from race 6 of Pseudomonas syringae pv. glycinea.</title>
        <authorList>
            <person name="Napoli C."/>
            <person name="Staskawicz B."/>
        </authorList>
    </citation>
    <scope>NUCLEOTIDE SEQUENCE [GENOMIC DNA]</scope>
    <source>
        <strain>Race 6</strain>
    </source>
</reference>
<feature type="chain" id="PRO_0000064770" description="Avirulence protein A">
    <location>
        <begin position="1"/>
        <end position="907"/>
    </location>
</feature>
<feature type="region of interest" description="Disordered" evidence="1">
    <location>
        <begin position="1"/>
        <end position="47"/>
    </location>
</feature>
<feature type="region of interest" description="Disordered" evidence="1">
    <location>
        <begin position="116"/>
        <end position="157"/>
    </location>
</feature>
<feature type="compositionally biased region" description="Polar residues" evidence="1">
    <location>
        <begin position="1"/>
        <end position="11"/>
    </location>
</feature>
<feature type="compositionally biased region" description="Polar residues" evidence="1">
    <location>
        <begin position="124"/>
        <end position="136"/>
    </location>
</feature>
<organism>
    <name type="scientific">Pseudomonas savastanoi pv. glycinea</name>
    <name type="common">Pseudomonas syringae pv. glycinea</name>
    <dbReference type="NCBI Taxonomy" id="318"/>
    <lineage>
        <taxon>Bacteria</taxon>
        <taxon>Pseudomonadati</taxon>
        <taxon>Pseudomonadota</taxon>
        <taxon>Gammaproteobacteria</taxon>
        <taxon>Pseudomonadales</taxon>
        <taxon>Pseudomonadaceae</taxon>
        <taxon>Pseudomonas</taxon>
    </lineage>
</organism>
<gene>
    <name type="primary">avrA</name>
</gene>